<reference key="1">
    <citation type="journal article" date="2003" name="Nucleic Acids Res.">
        <title>Complete chloroplast DNA sequence of the moss Physcomitrella patens: evidence for the loss and relocation of rpoA from the chloroplast to the nucleus.</title>
        <authorList>
            <person name="Sugiura C."/>
            <person name="Kobayashi Y."/>
            <person name="Setsuyuki A."/>
            <person name="Sugita C."/>
            <person name="Sugita M."/>
        </authorList>
    </citation>
    <scope>NUCLEOTIDE SEQUENCE [LARGE SCALE GENOMIC DNA]</scope>
    <source>
        <strain>cv. Gransden 2004</strain>
    </source>
</reference>
<accession>Q6YXL0</accession>
<feature type="chain" id="PRO_0000266597" description="Large ribosomal subunit protein uL14c">
    <location>
        <begin position="1"/>
        <end position="122"/>
    </location>
</feature>
<sequence>MIQPQTYLNVADNSGARKLMCIQILGASNRKYAHIGDIIIAVVKEAIPNMPLKKSEVVRAVVVRTCKELKRKNGTIIQFDDNAAVIINQEGNPKGTRVFGPVARELRESNFTKIVSLAPEVL</sequence>
<geneLocation type="chloroplast"/>
<name>RK14_PHYPA</name>
<dbReference type="EMBL" id="AP005672">
    <property type="protein sequence ID" value="BAC85078.1"/>
    <property type="molecule type" value="Genomic_DNA"/>
</dbReference>
<dbReference type="RefSeq" id="NP_904228.1">
    <property type="nucleotide sequence ID" value="NC_005087.2"/>
</dbReference>
<dbReference type="RefSeq" id="YP_009477558.1">
    <property type="nucleotide sequence ID" value="NC_037465.1"/>
</dbReference>
<dbReference type="SMR" id="Q6YXL0"/>
<dbReference type="FunCoup" id="Q6YXL0">
    <property type="interactions" value="691"/>
</dbReference>
<dbReference type="STRING" id="3218.Q6YXL0"/>
<dbReference type="GeneID" id="2546765"/>
<dbReference type="GeneID" id="36487192"/>
<dbReference type="KEGG" id="ppp:2546765"/>
<dbReference type="InParanoid" id="Q6YXL0"/>
<dbReference type="OrthoDB" id="274765at2759"/>
<dbReference type="Proteomes" id="UP000006727">
    <property type="component" value="Chloroplast"/>
</dbReference>
<dbReference type="GO" id="GO:0009507">
    <property type="term" value="C:chloroplast"/>
    <property type="evidence" value="ECO:0007669"/>
    <property type="project" value="UniProtKB-SubCell"/>
</dbReference>
<dbReference type="GO" id="GO:0022625">
    <property type="term" value="C:cytosolic large ribosomal subunit"/>
    <property type="evidence" value="ECO:0000318"/>
    <property type="project" value="GO_Central"/>
</dbReference>
<dbReference type="GO" id="GO:0070180">
    <property type="term" value="F:large ribosomal subunit rRNA binding"/>
    <property type="evidence" value="ECO:0000318"/>
    <property type="project" value="GO_Central"/>
</dbReference>
<dbReference type="GO" id="GO:0003735">
    <property type="term" value="F:structural constituent of ribosome"/>
    <property type="evidence" value="ECO:0000318"/>
    <property type="project" value="GO_Central"/>
</dbReference>
<dbReference type="GO" id="GO:0006412">
    <property type="term" value="P:translation"/>
    <property type="evidence" value="ECO:0007669"/>
    <property type="project" value="UniProtKB-UniRule"/>
</dbReference>
<dbReference type="CDD" id="cd00337">
    <property type="entry name" value="Ribosomal_uL14"/>
    <property type="match status" value="1"/>
</dbReference>
<dbReference type="FunFam" id="2.40.150.20:FF:000002">
    <property type="entry name" value="50S ribosomal protein L14, chloroplastic"/>
    <property type="match status" value="1"/>
</dbReference>
<dbReference type="Gene3D" id="2.40.150.20">
    <property type="entry name" value="Ribosomal protein L14"/>
    <property type="match status" value="1"/>
</dbReference>
<dbReference type="HAMAP" id="MF_01367">
    <property type="entry name" value="Ribosomal_uL14"/>
    <property type="match status" value="1"/>
</dbReference>
<dbReference type="InterPro" id="IPR000218">
    <property type="entry name" value="Ribosomal_uL14"/>
</dbReference>
<dbReference type="InterPro" id="IPR005745">
    <property type="entry name" value="Ribosomal_uL14_bac-type"/>
</dbReference>
<dbReference type="InterPro" id="IPR019972">
    <property type="entry name" value="Ribosomal_uL14_CS"/>
</dbReference>
<dbReference type="InterPro" id="IPR036853">
    <property type="entry name" value="Ribosomal_uL14_sf"/>
</dbReference>
<dbReference type="NCBIfam" id="TIGR01067">
    <property type="entry name" value="rplN_bact"/>
    <property type="match status" value="1"/>
</dbReference>
<dbReference type="PANTHER" id="PTHR11761">
    <property type="entry name" value="50S/60S RIBOSOMAL PROTEIN L14/L23"/>
    <property type="match status" value="1"/>
</dbReference>
<dbReference type="PANTHER" id="PTHR11761:SF3">
    <property type="entry name" value="LARGE RIBOSOMAL SUBUNIT PROTEIN UL14M"/>
    <property type="match status" value="1"/>
</dbReference>
<dbReference type="Pfam" id="PF00238">
    <property type="entry name" value="Ribosomal_L14"/>
    <property type="match status" value="1"/>
</dbReference>
<dbReference type="SMART" id="SM01374">
    <property type="entry name" value="Ribosomal_L14"/>
    <property type="match status" value="1"/>
</dbReference>
<dbReference type="SUPFAM" id="SSF50193">
    <property type="entry name" value="Ribosomal protein L14"/>
    <property type="match status" value="1"/>
</dbReference>
<dbReference type="PROSITE" id="PS00049">
    <property type="entry name" value="RIBOSOMAL_L14"/>
    <property type="match status" value="1"/>
</dbReference>
<gene>
    <name evidence="1" type="primary">rpl14</name>
</gene>
<protein>
    <recommendedName>
        <fullName evidence="1">Large ribosomal subunit protein uL14c</fullName>
    </recommendedName>
    <alternativeName>
        <fullName evidence="2">50S ribosomal protein L14, chloroplastic</fullName>
    </alternativeName>
</protein>
<proteinExistence type="inferred from homology"/>
<keyword id="KW-0150">Chloroplast</keyword>
<keyword id="KW-0934">Plastid</keyword>
<keyword id="KW-1185">Reference proteome</keyword>
<keyword id="KW-0687">Ribonucleoprotein</keyword>
<keyword id="KW-0689">Ribosomal protein</keyword>
<keyword id="KW-0694">RNA-binding</keyword>
<keyword id="KW-0699">rRNA-binding</keyword>
<comment type="function">
    <text evidence="1">Binds to 23S rRNA.</text>
</comment>
<comment type="subunit">
    <text evidence="1">Part of the 50S ribosomal subunit.</text>
</comment>
<comment type="subcellular location">
    <subcellularLocation>
        <location>Plastid</location>
        <location>Chloroplast</location>
    </subcellularLocation>
</comment>
<comment type="similarity">
    <text evidence="1">Belongs to the universal ribosomal protein uL14 family.</text>
</comment>
<evidence type="ECO:0000255" key="1">
    <source>
        <dbReference type="HAMAP-Rule" id="MF_01367"/>
    </source>
</evidence>
<evidence type="ECO:0000305" key="2"/>
<organism>
    <name type="scientific">Physcomitrium patens</name>
    <name type="common">Spreading-leaved earth moss</name>
    <name type="synonym">Physcomitrella patens</name>
    <dbReference type="NCBI Taxonomy" id="3218"/>
    <lineage>
        <taxon>Eukaryota</taxon>
        <taxon>Viridiplantae</taxon>
        <taxon>Streptophyta</taxon>
        <taxon>Embryophyta</taxon>
        <taxon>Bryophyta</taxon>
        <taxon>Bryophytina</taxon>
        <taxon>Bryopsida</taxon>
        <taxon>Funariidae</taxon>
        <taxon>Funariales</taxon>
        <taxon>Funariaceae</taxon>
        <taxon>Physcomitrium</taxon>
    </lineage>
</organism>